<name>MTNC_SHESA</name>
<reference key="1">
    <citation type="submission" date="2006-09" db="EMBL/GenBank/DDBJ databases">
        <title>Complete sequence of chromosome 1 of Shewanella sp. ANA-3.</title>
        <authorList>
            <person name="Copeland A."/>
            <person name="Lucas S."/>
            <person name="Lapidus A."/>
            <person name="Barry K."/>
            <person name="Detter J.C."/>
            <person name="Glavina del Rio T."/>
            <person name="Hammon N."/>
            <person name="Israni S."/>
            <person name="Dalin E."/>
            <person name="Tice H."/>
            <person name="Pitluck S."/>
            <person name="Chertkov O."/>
            <person name="Brettin T."/>
            <person name="Bruce D."/>
            <person name="Han C."/>
            <person name="Tapia R."/>
            <person name="Gilna P."/>
            <person name="Schmutz J."/>
            <person name="Larimer F."/>
            <person name="Land M."/>
            <person name="Hauser L."/>
            <person name="Kyrpides N."/>
            <person name="Kim E."/>
            <person name="Newman D."/>
            <person name="Salticov C."/>
            <person name="Konstantinidis K."/>
            <person name="Klappenback J."/>
            <person name="Tiedje J."/>
            <person name="Richardson P."/>
        </authorList>
    </citation>
    <scope>NUCLEOTIDE SEQUENCE [LARGE SCALE GENOMIC DNA]</scope>
    <source>
        <strain>ANA-3</strain>
    </source>
</reference>
<keyword id="KW-0028">Amino-acid biosynthesis</keyword>
<keyword id="KW-0378">Hydrolase</keyword>
<keyword id="KW-0460">Magnesium</keyword>
<keyword id="KW-0479">Metal-binding</keyword>
<keyword id="KW-0486">Methionine biosynthesis</keyword>
<evidence type="ECO:0000255" key="1">
    <source>
        <dbReference type="HAMAP-Rule" id="MF_01681"/>
    </source>
</evidence>
<organism>
    <name type="scientific">Shewanella sp. (strain ANA-3)</name>
    <dbReference type="NCBI Taxonomy" id="94122"/>
    <lineage>
        <taxon>Bacteria</taxon>
        <taxon>Pseudomonadati</taxon>
        <taxon>Pseudomonadota</taxon>
        <taxon>Gammaproteobacteria</taxon>
        <taxon>Alteromonadales</taxon>
        <taxon>Shewanellaceae</taxon>
        <taxon>Shewanella</taxon>
    </lineage>
</organism>
<comment type="function">
    <text evidence="1">Bifunctional enzyme that catalyzes the enolization of 2,3-diketo-5-methylthiopentyl-1-phosphate (DK-MTP-1-P) into the intermediate 2-hydroxy-3-keto-5-methylthiopentenyl-1-phosphate (HK-MTPenyl-1-P), which is then dephosphorylated to form the acireductone 1,2-dihydroxy-3-keto-5-methylthiopentene (DHK-MTPene).</text>
</comment>
<comment type="catalytic activity">
    <reaction evidence="1">
        <text>5-methylsulfanyl-2,3-dioxopentyl phosphate + H2O = 1,2-dihydroxy-5-(methylsulfanyl)pent-1-en-3-one + phosphate</text>
        <dbReference type="Rhea" id="RHEA:21700"/>
        <dbReference type="ChEBI" id="CHEBI:15377"/>
        <dbReference type="ChEBI" id="CHEBI:43474"/>
        <dbReference type="ChEBI" id="CHEBI:49252"/>
        <dbReference type="ChEBI" id="CHEBI:58828"/>
        <dbReference type="EC" id="3.1.3.77"/>
    </reaction>
</comment>
<comment type="cofactor">
    <cofactor evidence="1">
        <name>Mg(2+)</name>
        <dbReference type="ChEBI" id="CHEBI:18420"/>
    </cofactor>
    <text evidence="1">Binds 1 Mg(2+) ion per subunit.</text>
</comment>
<comment type="pathway">
    <text evidence="1">Amino-acid biosynthesis; L-methionine biosynthesis via salvage pathway; L-methionine from S-methyl-5-thio-alpha-D-ribose 1-phosphate: step 3/6.</text>
</comment>
<comment type="pathway">
    <text evidence="1">Amino-acid biosynthesis; L-methionine biosynthesis via salvage pathway; L-methionine from S-methyl-5-thio-alpha-D-ribose 1-phosphate: step 4/6.</text>
</comment>
<comment type="subunit">
    <text evidence="1">Monomer.</text>
</comment>
<comment type="similarity">
    <text evidence="1">Belongs to the HAD-like hydrolase superfamily. MasA/MtnC family.</text>
</comment>
<sequence>MGIRAIVVDTAGTTTDLTFIQDVLFPYSVKALPDFLAQNQHNVLVENCICDTRDIALEPDANLARVTEILQQWVHEDRKATPLKTLQGLIWKQGYAHGEFTGHIFPDFIEAVNRFSAQKLRIYSFSSGSVEAQKLLFSHSDGGDLTEMFSGHFDTRTGNKLDKQAYANILNTISLSPKQVLFVSDVVEELKAAEAAGMMTCQMVRDSKQRTGDYRTINSFDELVID</sequence>
<protein>
    <recommendedName>
        <fullName evidence="1">Enolase-phosphatase E1</fullName>
        <ecNumber evidence="1">3.1.3.77</ecNumber>
    </recommendedName>
    <alternativeName>
        <fullName evidence="1">2,3-diketo-5-methylthio-1-phosphopentane phosphatase</fullName>
    </alternativeName>
</protein>
<dbReference type="EC" id="3.1.3.77" evidence="1"/>
<dbReference type="EMBL" id="CP000469">
    <property type="protein sequence ID" value="ABK46334.1"/>
    <property type="molecule type" value="Genomic_DNA"/>
</dbReference>
<dbReference type="RefSeq" id="WP_011715368.1">
    <property type="nucleotide sequence ID" value="NC_008577.1"/>
</dbReference>
<dbReference type="SMR" id="A0KRB5"/>
<dbReference type="STRING" id="94122.Shewana3_0089"/>
<dbReference type="KEGG" id="shn:Shewana3_0089"/>
<dbReference type="eggNOG" id="COG4229">
    <property type="taxonomic scope" value="Bacteria"/>
</dbReference>
<dbReference type="HOGENOM" id="CLU_023273_0_0_6"/>
<dbReference type="OrthoDB" id="9797416at2"/>
<dbReference type="UniPathway" id="UPA00904">
    <property type="reaction ID" value="UER00876"/>
</dbReference>
<dbReference type="UniPathway" id="UPA00904">
    <property type="reaction ID" value="UER00877"/>
</dbReference>
<dbReference type="Proteomes" id="UP000002589">
    <property type="component" value="Chromosome"/>
</dbReference>
<dbReference type="GO" id="GO:0043715">
    <property type="term" value="F:2,3-diketo-5-methylthiopentyl-1-phosphate enolase activity"/>
    <property type="evidence" value="ECO:0007669"/>
    <property type="project" value="UniProtKB-UniRule"/>
</dbReference>
<dbReference type="GO" id="GO:0043716">
    <property type="term" value="F:2-hydroxy-3-keto-5-methylthiopentenyl-1-phosphate phosphatase activity"/>
    <property type="evidence" value="ECO:0007669"/>
    <property type="project" value="UniProtKB-UniRule"/>
</dbReference>
<dbReference type="GO" id="GO:0043874">
    <property type="term" value="F:acireductone synthase activity"/>
    <property type="evidence" value="ECO:0007669"/>
    <property type="project" value="UniProtKB-EC"/>
</dbReference>
<dbReference type="GO" id="GO:0000287">
    <property type="term" value="F:magnesium ion binding"/>
    <property type="evidence" value="ECO:0007669"/>
    <property type="project" value="UniProtKB-UniRule"/>
</dbReference>
<dbReference type="GO" id="GO:0019509">
    <property type="term" value="P:L-methionine salvage from methylthioadenosine"/>
    <property type="evidence" value="ECO:0007669"/>
    <property type="project" value="UniProtKB-UniRule"/>
</dbReference>
<dbReference type="CDD" id="cd01629">
    <property type="entry name" value="HAD_EP"/>
    <property type="match status" value="1"/>
</dbReference>
<dbReference type="FunFam" id="1.10.720.60:FF:000008">
    <property type="entry name" value="Enolase-phosphatase E1"/>
    <property type="match status" value="1"/>
</dbReference>
<dbReference type="Gene3D" id="1.10.720.60">
    <property type="match status" value="1"/>
</dbReference>
<dbReference type="Gene3D" id="3.40.50.1000">
    <property type="entry name" value="HAD superfamily/HAD-like"/>
    <property type="match status" value="1"/>
</dbReference>
<dbReference type="HAMAP" id="MF_01681">
    <property type="entry name" value="Salvage_MtnC"/>
    <property type="match status" value="1"/>
</dbReference>
<dbReference type="InterPro" id="IPR023943">
    <property type="entry name" value="Enolase-ppase_E1"/>
</dbReference>
<dbReference type="InterPro" id="IPR036412">
    <property type="entry name" value="HAD-like_sf"/>
</dbReference>
<dbReference type="InterPro" id="IPR006439">
    <property type="entry name" value="HAD-SF_hydro_IA"/>
</dbReference>
<dbReference type="InterPro" id="IPR023214">
    <property type="entry name" value="HAD_sf"/>
</dbReference>
<dbReference type="NCBIfam" id="TIGR01691">
    <property type="entry name" value="enolase-ppase"/>
    <property type="match status" value="1"/>
</dbReference>
<dbReference type="NCBIfam" id="TIGR01549">
    <property type="entry name" value="HAD-SF-IA-v1"/>
    <property type="match status" value="1"/>
</dbReference>
<dbReference type="PANTHER" id="PTHR20371">
    <property type="entry name" value="ENOLASE-PHOSPHATASE E1"/>
    <property type="match status" value="1"/>
</dbReference>
<dbReference type="PANTHER" id="PTHR20371:SF1">
    <property type="entry name" value="ENOLASE-PHOSPHATASE E1"/>
    <property type="match status" value="1"/>
</dbReference>
<dbReference type="Pfam" id="PF00702">
    <property type="entry name" value="Hydrolase"/>
    <property type="match status" value="1"/>
</dbReference>
<dbReference type="PRINTS" id="PR00413">
    <property type="entry name" value="HADHALOGNASE"/>
</dbReference>
<dbReference type="SFLD" id="SFLDG01133">
    <property type="entry name" value="C1.5.4:_Enolase-phosphatase_Li"/>
    <property type="match status" value="1"/>
</dbReference>
<dbReference type="SFLD" id="SFLDF00044">
    <property type="entry name" value="enolase-phosphatase"/>
    <property type="match status" value="1"/>
</dbReference>
<dbReference type="SUPFAM" id="SSF56784">
    <property type="entry name" value="HAD-like"/>
    <property type="match status" value="1"/>
</dbReference>
<gene>
    <name evidence="1" type="primary">mtnC</name>
    <name type="ordered locus">Shewana3_0089</name>
</gene>
<accession>A0KRB5</accession>
<feature type="chain" id="PRO_0000357408" description="Enolase-phosphatase E1">
    <location>
        <begin position="1"/>
        <end position="226"/>
    </location>
</feature>
<proteinExistence type="inferred from homology"/>